<gene>
    <name evidence="1" type="primary">lgt1</name>
    <name type="ordered locus">CPE0041</name>
</gene>
<protein>
    <recommendedName>
        <fullName evidence="1">Phosphatidylglycerol--prolipoprotein diacylglyceryl transferase 1</fullName>
        <ecNumber evidence="1">2.5.1.145</ecNumber>
    </recommendedName>
</protein>
<comment type="function">
    <text evidence="1">Catalyzes the transfer of the diacylglyceryl group from phosphatidylglycerol to the sulfhydryl group of the N-terminal cysteine of a prolipoprotein, the first step in the formation of mature lipoproteins.</text>
</comment>
<comment type="catalytic activity">
    <reaction evidence="1">
        <text>L-cysteinyl-[prolipoprotein] + a 1,2-diacyl-sn-glycero-3-phospho-(1'-sn-glycerol) = an S-1,2-diacyl-sn-glyceryl-L-cysteinyl-[prolipoprotein] + sn-glycerol 1-phosphate + H(+)</text>
        <dbReference type="Rhea" id="RHEA:56712"/>
        <dbReference type="Rhea" id="RHEA-COMP:14679"/>
        <dbReference type="Rhea" id="RHEA-COMP:14680"/>
        <dbReference type="ChEBI" id="CHEBI:15378"/>
        <dbReference type="ChEBI" id="CHEBI:29950"/>
        <dbReference type="ChEBI" id="CHEBI:57685"/>
        <dbReference type="ChEBI" id="CHEBI:64716"/>
        <dbReference type="ChEBI" id="CHEBI:140658"/>
        <dbReference type="EC" id="2.5.1.145"/>
    </reaction>
</comment>
<comment type="pathway">
    <text evidence="1">Protein modification; lipoprotein biosynthesis (diacylglyceryl transfer).</text>
</comment>
<comment type="subcellular location">
    <subcellularLocation>
        <location evidence="1">Cell membrane</location>
        <topology evidence="1">Multi-pass membrane protein</topology>
    </subcellularLocation>
</comment>
<comment type="similarity">
    <text evidence="1">Belongs to the Lgt family.</text>
</comment>
<sequence>MNPVAFSIGSFEVRWYGIIIALGILIAMTLVSINAKKKNLNFDVILDLFLWCFPFAIIGARAYYVLFELENYHSFWDMINIRQGGLAIHGGIIGAFLTAFIYCKVKKVDFLAYADIVAPAFILAQGIGRWGNFFNQEAHGGQVTSEFISKFPEFIQRGMYINGAYYHPTFLYESIWDIFVAILLMIILYNITDRYKGVVISAYISLYSLGRFFIEGLRTDSLYFMNIRVAQLVSLLGIIIGIVAIIIIVSRGKKKRKGIFIN</sequence>
<dbReference type="EC" id="2.5.1.145" evidence="1"/>
<dbReference type="EMBL" id="BA000016">
    <property type="protein sequence ID" value="BAB79747.1"/>
    <property type="molecule type" value="Genomic_DNA"/>
</dbReference>
<dbReference type="SMR" id="Q8XPC4"/>
<dbReference type="STRING" id="195102.gene:10489271"/>
<dbReference type="KEGG" id="cpe:CPE0041"/>
<dbReference type="HOGENOM" id="CLU_013386_0_1_9"/>
<dbReference type="UniPathway" id="UPA00664"/>
<dbReference type="Proteomes" id="UP000000818">
    <property type="component" value="Chromosome"/>
</dbReference>
<dbReference type="GO" id="GO:0005886">
    <property type="term" value="C:plasma membrane"/>
    <property type="evidence" value="ECO:0007669"/>
    <property type="project" value="UniProtKB-SubCell"/>
</dbReference>
<dbReference type="GO" id="GO:0008961">
    <property type="term" value="F:phosphatidylglycerol-prolipoprotein diacylglyceryl transferase activity"/>
    <property type="evidence" value="ECO:0007669"/>
    <property type="project" value="UniProtKB-UniRule"/>
</dbReference>
<dbReference type="GO" id="GO:0042158">
    <property type="term" value="P:lipoprotein biosynthetic process"/>
    <property type="evidence" value="ECO:0007669"/>
    <property type="project" value="UniProtKB-UniRule"/>
</dbReference>
<dbReference type="HAMAP" id="MF_01147">
    <property type="entry name" value="Lgt"/>
    <property type="match status" value="1"/>
</dbReference>
<dbReference type="InterPro" id="IPR001640">
    <property type="entry name" value="Lgt"/>
</dbReference>
<dbReference type="NCBIfam" id="TIGR00544">
    <property type="entry name" value="lgt"/>
    <property type="match status" value="1"/>
</dbReference>
<dbReference type="PANTHER" id="PTHR30589:SF0">
    <property type="entry name" value="PHOSPHATIDYLGLYCEROL--PROLIPOPROTEIN DIACYLGLYCERYL TRANSFERASE"/>
    <property type="match status" value="1"/>
</dbReference>
<dbReference type="PANTHER" id="PTHR30589">
    <property type="entry name" value="PROLIPOPROTEIN DIACYLGLYCERYL TRANSFERASE"/>
    <property type="match status" value="1"/>
</dbReference>
<dbReference type="Pfam" id="PF01790">
    <property type="entry name" value="LGT"/>
    <property type="match status" value="1"/>
</dbReference>
<dbReference type="PROSITE" id="PS01311">
    <property type="entry name" value="LGT"/>
    <property type="match status" value="1"/>
</dbReference>
<proteinExistence type="inferred from homology"/>
<evidence type="ECO:0000255" key="1">
    <source>
        <dbReference type="HAMAP-Rule" id="MF_01147"/>
    </source>
</evidence>
<organism>
    <name type="scientific">Clostridium perfringens (strain 13 / Type A)</name>
    <dbReference type="NCBI Taxonomy" id="195102"/>
    <lineage>
        <taxon>Bacteria</taxon>
        <taxon>Bacillati</taxon>
        <taxon>Bacillota</taxon>
        <taxon>Clostridia</taxon>
        <taxon>Eubacteriales</taxon>
        <taxon>Clostridiaceae</taxon>
        <taxon>Clostridium</taxon>
    </lineage>
</organism>
<keyword id="KW-1003">Cell membrane</keyword>
<keyword id="KW-0472">Membrane</keyword>
<keyword id="KW-1185">Reference proteome</keyword>
<keyword id="KW-0808">Transferase</keyword>
<keyword id="KW-0812">Transmembrane</keyword>
<keyword id="KW-1133">Transmembrane helix</keyword>
<accession>Q8XPC4</accession>
<name>LGT1_CLOPE</name>
<reference key="1">
    <citation type="journal article" date="2002" name="Proc. Natl. Acad. Sci. U.S.A.">
        <title>Complete genome sequence of Clostridium perfringens, an anaerobic flesh-eater.</title>
        <authorList>
            <person name="Shimizu T."/>
            <person name="Ohtani K."/>
            <person name="Hirakawa H."/>
            <person name="Ohshima K."/>
            <person name="Yamashita A."/>
            <person name="Shiba T."/>
            <person name="Ogasawara N."/>
            <person name="Hattori M."/>
            <person name="Kuhara S."/>
            <person name="Hayashi H."/>
        </authorList>
    </citation>
    <scope>NUCLEOTIDE SEQUENCE [LARGE SCALE GENOMIC DNA]</scope>
    <source>
        <strain>13 / Type A</strain>
    </source>
</reference>
<feature type="chain" id="PRO_0000172586" description="Phosphatidylglycerol--prolipoprotein diacylglyceryl transferase 1">
    <location>
        <begin position="1"/>
        <end position="262"/>
    </location>
</feature>
<feature type="transmembrane region" description="Helical" evidence="1">
    <location>
        <begin position="15"/>
        <end position="35"/>
    </location>
</feature>
<feature type="transmembrane region" description="Helical" evidence="1">
    <location>
        <begin position="40"/>
        <end position="60"/>
    </location>
</feature>
<feature type="transmembrane region" description="Helical" evidence="1">
    <location>
        <begin position="83"/>
        <end position="103"/>
    </location>
</feature>
<feature type="transmembrane region" description="Helical" evidence="1">
    <location>
        <begin position="108"/>
        <end position="128"/>
    </location>
</feature>
<feature type="transmembrane region" description="Helical" evidence="1">
    <location>
        <begin position="169"/>
        <end position="189"/>
    </location>
</feature>
<feature type="transmembrane region" description="Helical" evidence="1">
    <location>
        <begin position="197"/>
        <end position="217"/>
    </location>
</feature>
<feature type="transmembrane region" description="Helical" evidence="1">
    <location>
        <begin position="229"/>
        <end position="249"/>
    </location>
</feature>
<feature type="binding site" evidence="1">
    <location>
        <position position="129"/>
    </location>
    <ligand>
        <name>a 1,2-diacyl-sn-glycero-3-phospho-(1'-sn-glycerol)</name>
        <dbReference type="ChEBI" id="CHEBI:64716"/>
    </ligand>
</feature>